<protein>
    <recommendedName>
        <fullName evidence="5">Variable large protein 4</fullName>
    </recommendedName>
</protein>
<comment type="function">
    <text evidence="1">The Vlp and Vsp proteins are antigenically distinct proteins, only one vlp or vsp gene is transcriptionally active at any one time. Switching between these genes is a mechanism of host immune response evasion.</text>
</comment>
<comment type="subcellular location">
    <subcellularLocation>
        <location evidence="1">Cell outer membrane</location>
        <topology>Lipid-anchor</topology>
    </subcellularLocation>
</comment>
<comment type="miscellaneous">
    <text evidence="8">Genes for both Vlp and Vsp families are on (usually) unnamed linear plasmids in B.hermsii HS1.</text>
</comment>
<comment type="similarity">
    <text evidence="4">Belongs to the variable large protein (Vlp) family. Delta subfamily.</text>
</comment>
<evidence type="ECO:0000250" key="1">
    <source>
        <dbReference type="UniProtKB" id="P21875"/>
    </source>
</evidence>
<evidence type="ECO:0000255" key="2"/>
<evidence type="ECO:0000255" key="3">
    <source>
        <dbReference type="PROSITE-ProRule" id="PRU00303"/>
    </source>
</evidence>
<evidence type="ECO:0000269" key="4">
    <source>
    </source>
</evidence>
<evidence type="ECO:0000303" key="5">
    <source>
    </source>
</evidence>
<evidence type="ECO:0000303" key="6">
    <source ref="1"/>
</evidence>
<evidence type="ECO:0000305" key="7"/>
<evidence type="ECO:0000305" key="8">
    <source>
    </source>
</evidence>
<evidence type="ECO:0000312" key="9">
    <source>
        <dbReference type="EMBL" id="AAB09432.1"/>
    </source>
</evidence>
<sequence>MRRRISAIIMTLFMVLVSCNSGGVAEDPKTVYLTSIANLGKGFLDVFVTFGDMVAGAFGIRADTKKSDIGKYFNDIEKTMTTVKKRLQDEVAKNGNYVKVKEVVDKFVADVLDKIAAGAKEAAKGATGDDKIRKCYFCWAWSQSADKDSVISLVKGIKTIVDAVLKDKGDAGATKTGEDKKDIGNLFINDAGKDGSKRENIAKAAASIGSVTGADILQAIIKSKENPNADSVNGIEKATDAAEIAIVPAVNKTEIKEDTAKKDAVIAAGIALRAMAKDGKFAAKNEEKSANAVNGAAASAVGKTLSTLIIAIRNTVDSGLKTINEALATVKQEDKSAEATNPAEATTSGQ</sequence>
<feature type="signal peptide" evidence="3">
    <location>
        <begin position="1"/>
        <end position="18"/>
    </location>
</feature>
<feature type="chain" id="PRO_0000244499" description="Variable large protein 4" evidence="2">
    <location>
        <begin position="19"/>
        <end position="350"/>
    </location>
</feature>
<feature type="lipid moiety-binding region" description="N-palmitoyl cysteine" evidence="2 7">
    <location>
        <position position="19"/>
    </location>
</feature>
<feature type="lipid moiety-binding region" description="S-diacylglycerol cysteine" evidence="2 7">
    <location>
        <position position="19"/>
    </location>
</feature>
<organism>
    <name type="scientific">Borrelia hermsii</name>
    <dbReference type="NCBI Taxonomy" id="140"/>
    <lineage>
        <taxon>Bacteria</taxon>
        <taxon>Pseudomonadati</taxon>
        <taxon>Spirochaetota</taxon>
        <taxon>Spirochaetia</taxon>
        <taxon>Spirochaetales</taxon>
        <taxon>Borreliaceae</taxon>
        <taxon>Borrelia</taxon>
    </lineage>
</organism>
<dbReference type="EMBL" id="U51926">
    <property type="protein sequence ID" value="AAB09432.1"/>
    <property type="molecule type" value="Genomic_DNA"/>
</dbReference>
<dbReference type="SMR" id="P70897"/>
<dbReference type="GO" id="GO:0009279">
    <property type="term" value="C:cell outer membrane"/>
    <property type="evidence" value="ECO:0007669"/>
    <property type="project" value="UniProtKB-SubCell"/>
</dbReference>
<dbReference type="InterPro" id="IPR000680">
    <property type="entry name" value="Borrelia_lipo"/>
</dbReference>
<dbReference type="Pfam" id="PF00921">
    <property type="entry name" value="Lipoprotein_2"/>
    <property type="match status" value="1"/>
</dbReference>
<dbReference type="SUPFAM" id="SSF74748">
    <property type="entry name" value="Variable surface antigen VlsE"/>
    <property type="match status" value="1"/>
</dbReference>
<dbReference type="PROSITE" id="PS51257">
    <property type="entry name" value="PROKAR_LIPOPROTEIN"/>
    <property type="match status" value="1"/>
</dbReference>
<name>VLP4_BORHE</name>
<gene>
    <name evidence="5" type="primary">vlp4</name>
    <name evidence="6" type="synonym">vmp4</name>
</gene>
<accession>P70897</accession>
<geneLocation type="plasmid" evidence="4"/>
<proteinExistence type="inferred from homology"/>
<keyword id="KW-0998">Cell outer membrane</keyword>
<keyword id="KW-0449">Lipoprotein</keyword>
<keyword id="KW-0472">Membrane</keyword>
<keyword id="KW-0564">Palmitate</keyword>
<keyword id="KW-0614">Plasmid</keyword>
<keyword id="KW-0732">Signal</keyword>
<reference evidence="9" key="1">
    <citation type="submission" date="1996-03" db="EMBL/GenBank/DDBJ databases">
        <authorList>
            <person name="Restrepo B.I."/>
            <person name="Carter C.J."/>
            <person name="Infante D."/>
            <person name="Barbour A.G."/>
        </authorList>
    </citation>
    <scope>NUCLEOTIDE SEQUENCE [GENOMIC DNA]</scope>
    <source>
        <strain>ATCC 35209 / HS1</strain>
    </source>
</reference>
<reference evidence="7" key="2">
    <citation type="journal article" date="1998" name="Infect. Immun.">
        <title>Population structure of the relapsing fever spirochete Borrelia hermsii as indicated by polymorphism of two multigene families that encode immunogenic outer surface lipoproteins.</title>
        <authorList>
            <person name="Hinnebusch B.J."/>
            <person name="Barbour A.G."/>
            <person name="Restrepo B.I."/>
            <person name="Schwan T.G."/>
        </authorList>
    </citation>
    <scope>NOMENCLATURE</scope>
</reference>